<sequence length="232" mass="25026">MTNYREIAWQGLWKNNPGLVQLLGLCPLLAVTATITNALGLGVATMLVLIGSNILVSLVRDYVPKEIRIPVFVMIIAALVTTVQLLINAYAYGLYLSLGIFLPLIVTNCIIIGRAEAFASRNNAFSAAFDGLMMGLGFTLVLAVLGATRELLGQGTLFDGADQLLGPWAKSLTIHVWQVDTPFLLAMLPPGAFIVMGLLIALKNVIDKKLKEHQPQVATEPSVTRARITKVS</sequence>
<evidence type="ECO:0000255" key="1">
    <source>
        <dbReference type="HAMAP-Rule" id="MF_00478"/>
    </source>
</evidence>
<gene>
    <name evidence="1" type="primary">rnfE</name>
    <name type="ordered locus">Sputcn32_1845</name>
</gene>
<proteinExistence type="inferred from homology"/>
<feature type="chain" id="PRO_1000014104" description="Ion-translocating oxidoreductase complex subunit E">
    <location>
        <begin position="1"/>
        <end position="232"/>
    </location>
</feature>
<feature type="transmembrane region" description="Helical" evidence="1">
    <location>
        <begin position="18"/>
        <end position="38"/>
    </location>
</feature>
<feature type="transmembrane region" description="Helical" evidence="1">
    <location>
        <begin position="39"/>
        <end position="59"/>
    </location>
</feature>
<feature type="transmembrane region" description="Helical" evidence="1">
    <location>
        <begin position="69"/>
        <end position="89"/>
    </location>
</feature>
<feature type="transmembrane region" description="Helical" evidence="1">
    <location>
        <begin position="93"/>
        <end position="113"/>
    </location>
</feature>
<feature type="transmembrane region" description="Helical" evidence="1">
    <location>
        <begin position="127"/>
        <end position="147"/>
    </location>
</feature>
<feature type="transmembrane region" description="Helical" evidence="1">
    <location>
        <begin position="182"/>
        <end position="202"/>
    </location>
</feature>
<organism>
    <name type="scientific">Shewanella putrefaciens (strain CN-32 / ATCC BAA-453)</name>
    <dbReference type="NCBI Taxonomy" id="319224"/>
    <lineage>
        <taxon>Bacteria</taxon>
        <taxon>Pseudomonadati</taxon>
        <taxon>Pseudomonadota</taxon>
        <taxon>Gammaproteobacteria</taxon>
        <taxon>Alteromonadales</taxon>
        <taxon>Shewanellaceae</taxon>
        <taxon>Shewanella</taxon>
    </lineage>
</organism>
<accession>A4Y6I5</accession>
<keyword id="KW-0997">Cell inner membrane</keyword>
<keyword id="KW-1003">Cell membrane</keyword>
<keyword id="KW-0249">Electron transport</keyword>
<keyword id="KW-0472">Membrane</keyword>
<keyword id="KW-1278">Translocase</keyword>
<keyword id="KW-0812">Transmembrane</keyword>
<keyword id="KW-1133">Transmembrane helix</keyword>
<keyword id="KW-0813">Transport</keyword>
<protein>
    <recommendedName>
        <fullName evidence="1">Ion-translocating oxidoreductase complex subunit E</fullName>
        <ecNumber evidence="1">7.-.-.-</ecNumber>
    </recommendedName>
    <alternativeName>
        <fullName evidence="1">Rnf electron transport complex subunit E</fullName>
    </alternativeName>
</protein>
<comment type="function">
    <text evidence="1">Part of a membrane-bound complex that couples electron transfer with translocation of ions across the membrane.</text>
</comment>
<comment type="subunit">
    <text evidence="1">The complex is composed of six subunits: RnfA, RnfB, RnfC, RnfD, RnfE and RnfG.</text>
</comment>
<comment type="subcellular location">
    <subcellularLocation>
        <location evidence="1">Cell inner membrane</location>
        <topology evidence="1">Multi-pass membrane protein</topology>
    </subcellularLocation>
</comment>
<comment type="similarity">
    <text evidence="1">Belongs to the NqrDE/RnfAE family.</text>
</comment>
<reference key="1">
    <citation type="submission" date="2007-04" db="EMBL/GenBank/DDBJ databases">
        <title>Complete sequence of Shewanella putrefaciens CN-32.</title>
        <authorList>
            <consortium name="US DOE Joint Genome Institute"/>
            <person name="Copeland A."/>
            <person name="Lucas S."/>
            <person name="Lapidus A."/>
            <person name="Barry K."/>
            <person name="Detter J.C."/>
            <person name="Glavina del Rio T."/>
            <person name="Hammon N."/>
            <person name="Israni S."/>
            <person name="Dalin E."/>
            <person name="Tice H."/>
            <person name="Pitluck S."/>
            <person name="Chain P."/>
            <person name="Malfatti S."/>
            <person name="Shin M."/>
            <person name="Vergez L."/>
            <person name="Schmutz J."/>
            <person name="Larimer F."/>
            <person name="Land M."/>
            <person name="Hauser L."/>
            <person name="Kyrpides N."/>
            <person name="Mikhailova N."/>
            <person name="Romine M.F."/>
            <person name="Fredrickson J."/>
            <person name="Tiedje J."/>
            <person name="Richardson P."/>
        </authorList>
    </citation>
    <scope>NUCLEOTIDE SEQUENCE [LARGE SCALE GENOMIC DNA]</scope>
    <source>
        <strain>CN-32 / ATCC BAA-453</strain>
    </source>
</reference>
<dbReference type="EC" id="7.-.-.-" evidence="1"/>
<dbReference type="EMBL" id="CP000681">
    <property type="protein sequence ID" value="ABP75568.1"/>
    <property type="molecule type" value="Genomic_DNA"/>
</dbReference>
<dbReference type="SMR" id="A4Y6I5"/>
<dbReference type="STRING" id="319224.Sputcn32_1845"/>
<dbReference type="KEGG" id="spc:Sputcn32_1845"/>
<dbReference type="eggNOG" id="COG4660">
    <property type="taxonomic scope" value="Bacteria"/>
</dbReference>
<dbReference type="HOGENOM" id="CLU_046659_1_0_6"/>
<dbReference type="GO" id="GO:0005886">
    <property type="term" value="C:plasma membrane"/>
    <property type="evidence" value="ECO:0007669"/>
    <property type="project" value="UniProtKB-SubCell"/>
</dbReference>
<dbReference type="GO" id="GO:0022900">
    <property type="term" value="P:electron transport chain"/>
    <property type="evidence" value="ECO:0007669"/>
    <property type="project" value="UniProtKB-UniRule"/>
</dbReference>
<dbReference type="HAMAP" id="MF_00478">
    <property type="entry name" value="RsxE_RnfE"/>
    <property type="match status" value="1"/>
</dbReference>
<dbReference type="InterPro" id="IPR003667">
    <property type="entry name" value="NqrDE/RnfAE"/>
</dbReference>
<dbReference type="InterPro" id="IPR010968">
    <property type="entry name" value="RnfE"/>
</dbReference>
<dbReference type="NCBIfam" id="NF009070">
    <property type="entry name" value="PRK12405.1"/>
    <property type="match status" value="1"/>
</dbReference>
<dbReference type="NCBIfam" id="TIGR01948">
    <property type="entry name" value="rnfE"/>
    <property type="match status" value="1"/>
</dbReference>
<dbReference type="PANTHER" id="PTHR30586">
    <property type="entry name" value="ELECTRON TRANSPORT COMPLEX PROTEIN RNFE"/>
    <property type="match status" value="1"/>
</dbReference>
<dbReference type="PANTHER" id="PTHR30586:SF0">
    <property type="entry name" value="ION-TRANSLOCATING OXIDOREDUCTASE COMPLEX SUBUNIT E"/>
    <property type="match status" value="1"/>
</dbReference>
<dbReference type="Pfam" id="PF02508">
    <property type="entry name" value="Rnf-Nqr"/>
    <property type="match status" value="1"/>
</dbReference>
<dbReference type="PIRSF" id="PIRSF006102">
    <property type="entry name" value="NQR_DE"/>
    <property type="match status" value="1"/>
</dbReference>
<name>RNFE_SHEPC</name>